<proteinExistence type="predicted"/>
<keyword id="KW-1185">Reference proteome</keyword>
<protein>
    <recommendedName>
        <fullName evidence="3">Oxopyrrolidines biosynthesis cluster protein G</fullName>
    </recommendedName>
</protein>
<dbReference type="EMBL" id="KB644408">
    <property type="protein sequence ID" value="EPS26292.1"/>
    <property type="molecule type" value="Genomic_DNA"/>
</dbReference>
<dbReference type="SMR" id="S8AWN1"/>
<dbReference type="eggNOG" id="ENOG502RWKT">
    <property type="taxonomic scope" value="Eukaryota"/>
</dbReference>
<dbReference type="HOGENOM" id="CLU_834163_0_0_1"/>
<dbReference type="OrthoDB" id="5403091at2759"/>
<dbReference type="PhylomeDB" id="S8AWN1"/>
<dbReference type="Proteomes" id="UP000019376">
    <property type="component" value="Unassembled WGS sequence"/>
</dbReference>
<dbReference type="InterPro" id="IPR022085">
    <property type="entry name" value="OpdG"/>
</dbReference>
<dbReference type="InterPro" id="IPR053204">
    <property type="entry name" value="Oxopyrrolidines_Biosynth-assoc"/>
</dbReference>
<dbReference type="PANTHER" id="PTHR38797">
    <property type="entry name" value="NUCLEAR PORE COMPLEX PROTEIN NUP85-RELATED"/>
    <property type="match status" value="1"/>
</dbReference>
<dbReference type="PANTHER" id="PTHR38797:SF7">
    <property type="entry name" value="TRANSCRIPTION FACTOR DOMAIN-CONTAINING PROTEIN"/>
    <property type="match status" value="1"/>
</dbReference>
<dbReference type="Pfam" id="PF12311">
    <property type="entry name" value="DUF3632"/>
    <property type="match status" value="1"/>
</dbReference>
<gene>
    <name evidence="3" type="primary">opdG</name>
    <name type="ORF">PDE_01228</name>
</gene>
<organism>
    <name type="scientific">Penicillium oxalicum (strain 114-2 / CGMCC 5302)</name>
    <name type="common">Penicillium decumbens</name>
    <dbReference type="NCBI Taxonomy" id="933388"/>
    <lineage>
        <taxon>Eukaryota</taxon>
        <taxon>Fungi</taxon>
        <taxon>Dikarya</taxon>
        <taxon>Ascomycota</taxon>
        <taxon>Pezizomycotina</taxon>
        <taxon>Eurotiomycetes</taxon>
        <taxon>Eurotiomycetidae</taxon>
        <taxon>Eurotiales</taxon>
        <taxon>Aspergillaceae</taxon>
        <taxon>Penicillium</taxon>
    </lineage>
</organism>
<comment type="function">
    <text evidence="2">Part of the gene cluster that mediates the biosynthesis of oxopyrrolidines, polyketide-amino acid hybrid compounds with feature structures of tetramic acid (PubMed:36005526). Does not seem to play a role in oxopyrrolidines A and B biosynthesis (PubMed:36005526).</text>
</comment>
<comment type="disruption phenotype">
    <text evidence="2">Does not affect the production of oxopyrrolidines A and B.</text>
</comment>
<evidence type="ECO:0000256" key="1">
    <source>
        <dbReference type="SAM" id="MobiDB-lite"/>
    </source>
</evidence>
<evidence type="ECO:0000269" key="2">
    <source>
    </source>
</evidence>
<evidence type="ECO:0000303" key="3">
    <source>
    </source>
</evidence>
<reference key="1">
    <citation type="journal article" date="2013" name="PLoS ONE">
        <title>Genomic and secretomic analyses reveal unique features of the lignocellulolytic enzyme system of Penicillium decumbens.</title>
        <authorList>
            <person name="Liu G."/>
            <person name="Zhang L."/>
            <person name="Wei X."/>
            <person name="Zou G."/>
            <person name="Qin Y."/>
            <person name="Ma L."/>
            <person name="Li J."/>
            <person name="Zheng H."/>
            <person name="Wang S."/>
            <person name="Wang C."/>
            <person name="Xun L."/>
            <person name="Zhao G.-P."/>
            <person name="Zhou Z."/>
            <person name="Qu Y."/>
        </authorList>
    </citation>
    <scope>NUCLEOTIDE SEQUENCE [LARGE SCALE GENOMIC DNA]</scope>
    <source>
        <strain>114-2 / CGMCC 5302</strain>
    </source>
</reference>
<reference key="2">
    <citation type="journal article" date="2022" name="Mar. Drugs">
        <title>Identification of PKS-NRPS Hybrid Metabolites in Marine-Derived Penicillium oxalicum.</title>
        <authorList>
            <person name="Li H."/>
            <person name="Zhang W."/>
            <person name="Zhang X."/>
            <person name="Tang S."/>
            <person name="Men P."/>
            <person name="Xiong M."/>
            <person name="Li Z."/>
            <person name="Zhang Y."/>
            <person name="Huang X."/>
            <person name="Lu X."/>
        </authorList>
    </citation>
    <scope>FUNCTION</scope>
    <scope>DISRUPTION PHENOTYPE</scope>
</reference>
<name>OPDG_PENO1</name>
<feature type="chain" id="PRO_0000457056" description="Oxopyrrolidines biosynthesis cluster protein G">
    <location>
        <begin position="1"/>
        <end position="359"/>
    </location>
</feature>
<feature type="region of interest" description="Disordered" evidence="1">
    <location>
        <begin position="1"/>
        <end position="32"/>
    </location>
</feature>
<feature type="compositionally biased region" description="Low complexity" evidence="1">
    <location>
        <begin position="7"/>
        <end position="18"/>
    </location>
</feature>
<accession>S8AWN1</accession>
<sequence>MDHLRDSLLSSLPRDSPSIGAMDYARRDRESTRQSVARGDFEELRQAAFYNRTWVVTSRFCDIGAGVDSVEVHVHSLWYIYYELSRHISSQSPEHEGLVLDILRIQGMGPLNRPARGNSGVDIARTVDGTLWTDLPFLVGDMTSFWIEHGATMSGTHRLNLATFLAKLASARVAKDRMCQIALLLFRNVFETSLELRTGDESDGEDLNRGMRQLEVFHLLPAAVAWLKIAAHNLALLSEVCWSDCPSHISQGGEDFLESELGRRSPAGFSPWRYMFWMKRLHEIQGQAKEAGEKTLEELAADGIEYMSNTIQSRNSEIIRAFKSADSALHQDPHLSCLRNLAGFDDDEPEESQEIARES</sequence>